<comment type="function">
    <text evidence="2">With S4 and S5 plays an important role in translational accuracy.</text>
</comment>
<comment type="function">
    <text evidence="2">Interacts with and stabilizes bases of the 16S rRNA that are involved in tRNA selection in the A site and with the mRNA backbone. Located at the interface of the 30S and 50S subunits, it traverses the body of the 30S subunit contacting proteins on the other side and probably holding the rRNA structure together. The combined cluster of proteins S8, S12 and S17 appears to hold together the shoulder and platform of the 30S subunit.</text>
</comment>
<comment type="subunit">
    <text evidence="2">Part of the 30S ribosomal subunit. Contacts proteins S8 and S17. May interact with IF1 in the 30S initiation complex.</text>
</comment>
<comment type="similarity">
    <text evidence="2">Belongs to the universal ribosomal protein uS12 family.</text>
</comment>
<dbReference type="EMBL" id="CP001341">
    <property type="protein sequence ID" value="ACL40660.1"/>
    <property type="molecule type" value="Genomic_DNA"/>
</dbReference>
<dbReference type="RefSeq" id="WP_011692814.1">
    <property type="nucleotide sequence ID" value="NC_011886.1"/>
</dbReference>
<dbReference type="SMR" id="B8HD14"/>
<dbReference type="STRING" id="452863.Achl_2695"/>
<dbReference type="KEGG" id="ach:Achl_2695"/>
<dbReference type="eggNOG" id="COG0048">
    <property type="taxonomic scope" value="Bacteria"/>
</dbReference>
<dbReference type="HOGENOM" id="CLU_104295_1_2_11"/>
<dbReference type="OrthoDB" id="9802366at2"/>
<dbReference type="Proteomes" id="UP000002505">
    <property type="component" value="Chromosome"/>
</dbReference>
<dbReference type="GO" id="GO:0015935">
    <property type="term" value="C:small ribosomal subunit"/>
    <property type="evidence" value="ECO:0007669"/>
    <property type="project" value="InterPro"/>
</dbReference>
<dbReference type="GO" id="GO:0019843">
    <property type="term" value="F:rRNA binding"/>
    <property type="evidence" value="ECO:0007669"/>
    <property type="project" value="UniProtKB-UniRule"/>
</dbReference>
<dbReference type="GO" id="GO:0003735">
    <property type="term" value="F:structural constituent of ribosome"/>
    <property type="evidence" value="ECO:0007669"/>
    <property type="project" value="InterPro"/>
</dbReference>
<dbReference type="GO" id="GO:0000049">
    <property type="term" value="F:tRNA binding"/>
    <property type="evidence" value="ECO:0007669"/>
    <property type="project" value="UniProtKB-UniRule"/>
</dbReference>
<dbReference type="GO" id="GO:0006412">
    <property type="term" value="P:translation"/>
    <property type="evidence" value="ECO:0007669"/>
    <property type="project" value="UniProtKB-UniRule"/>
</dbReference>
<dbReference type="CDD" id="cd03368">
    <property type="entry name" value="Ribosomal_S12"/>
    <property type="match status" value="1"/>
</dbReference>
<dbReference type="FunFam" id="2.40.50.140:FF:000001">
    <property type="entry name" value="30S ribosomal protein S12"/>
    <property type="match status" value="1"/>
</dbReference>
<dbReference type="Gene3D" id="2.40.50.140">
    <property type="entry name" value="Nucleic acid-binding proteins"/>
    <property type="match status" value="1"/>
</dbReference>
<dbReference type="HAMAP" id="MF_00403_B">
    <property type="entry name" value="Ribosomal_uS12_B"/>
    <property type="match status" value="1"/>
</dbReference>
<dbReference type="InterPro" id="IPR012340">
    <property type="entry name" value="NA-bd_OB-fold"/>
</dbReference>
<dbReference type="InterPro" id="IPR006032">
    <property type="entry name" value="Ribosomal_uS12"/>
</dbReference>
<dbReference type="InterPro" id="IPR005679">
    <property type="entry name" value="Ribosomal_uS12_bac"/>
</dbReference>
<dbReference type="NCBIfam" id="TIGR00981">
    <property type="entry name" value="rpsL_bact"/>
    <property type="match status" value="1"/>
</dbReference>
<dbReference type="PANTHER" id="PTHR11652">
    <property type="entry name" value="30S RIBOSOMAL PROTEIN S12 FAMILY MEMBER"/>
    <property type="match status" value="1"/>
</dbReference>
<dbReference type="Pfam" id="PF00164">
    <property type="entry name" value="Ribosom_S12_S23"/>
    <property type="match status" value="1"/>
</dbReference>
<dbReference type="PIRSF" id="PIRSF002133">
    <property type="entry name" value="Ribosomal_S12/S23"/>
    <property type="match status" value="1"/>
</dbReference>
<dbReference type="PRINTS" id="PR01034">
    <property type="entry name" value="RIBOSOMALS12"/>
</dbReference>
<dbReference type="SUPFAM" id="SSF50249">
    <property type="entry name" value="Nucleic acid-binding proteins"/>
    <property type="match status" value="1"/>
</dbReference>
<dbReference type="PROSITE" id="PS00055">
    <property type="entry name" value="RIBOSOMAL_S12"/>
    <property type="match status" value="1"/>
</dbReference>
<organism>
    <name type="scientific">Pseudarthrobacter chlorophenolicus (strain ATCC 700700 / DSM 12829 / CIP 107037 / JCM 12360 / KCTC 9906 / NCIMB 13794 / A6)</name>
    <name type="common">Arthrobacter chlorophenolicus</name>
    <dbReference type="NCBI Taxonomy" id="452863"/>
    <lineage>
        <taxon>Bacteria</taxon>
        <taxon>Bacillati</taxon>
        <taxon>Actinomycetota</taxon>
        <taxon>Actinomycetes</taxon>
        <taxon>Micrococcales</taxon>
        <taxon>Micrococcaceae</taxon>
        <taxon>Pseudarthrobacter</taxon>
    </lineage>
</organism>
<gene>
    <name evidence="2" type="primary">rpsL</name>
    <name type="ordered locus">Achl_2695</name>
</gene>
<evidence type="ECO:0000250" key="1"/>
<evidence type="ECO:0000255" key="2">
    <source>
        <dbReference type="HAMAP-Rule" id="MF_00403"/>
    </source>
</evidence>
<evidence type="ECO:0000305" key="3"/>
<feature type="chain" id="PRO_1000194118" description="Small ribosomal subunit protein uS12">
    <location>
        <begin position="1"/>
        <end position="124"/>
    </location>
</feature>
<feature type="modified residue" description="3-methylthioaspartic acid" evidence="1">
    <location>
        <position position="89"/>
    </location>
</feature>
<name>RS12_PSECP</name>
<sequence>MPTINQLVRKGRTPKVKKTKAPALNGSPMRRGVCTRVYTTTPKKPNSALRKVARVRLNGGVEVTAYIPGVGHNLQEHSIVLVRGGRVKDLPGVRYKIVRGALDTQGVKNRKQARSRYGAKMEKK</sequence>
<accession>B8HD14</accession>
<proteinExistence type="inferred from homology"/>
<keyword id="KW-0488">Methylation</keyword>
<keyword id="KW-0687">Ribonucleoprotein</keyword>
<keyword id="KW-0689">Ribosomal protein</keyword>
<keyword id="KW-0694">RNA-binding</keyword>
<keyword id="KW-0699">rRNA-binding</keyword>
<keyword id="KW-0820">tRNA-binding</keyword>
<reference key="1">
    <citation type="submission" date="2009-01" db="EMBL/GenBank/DDBJ databases">
        <title>Complete sequence of chromosome of Arthrobacter chlorophenolicus A6.</title>
        <authorList>
            <consortium name="US DOE Joint Genome Institute"/>
            <person name="Lucas S."/>
            <person name="Copeland A."/>
            <person name="Lapidus A."/>
            <person name="Glavina del Rio T."/>
            <person name="Tice H."/>
            <person name="Bruce D."/>
            <person name="Goodwin L."/>
            <person name="Pitluck S."/>
            <person name="Goltsman E."/>
            <person name="Clum A."/>
            <person name="Larimer F."/>
            <person name="Land M."/>
            <person name="Hauser L."/>
            <person name="Kyrpides N."/>
            <person name="Mikhailova N."/>
            <person name="Jansson J."/>
            <person name="Richardson P."/>
        </authorList>
    </citation>
    <scope>NUCLEOTIDE SEQUENCE [LARGE SCALE GENOMIC DNA]</scope>
    <source>
        <strain>ATCC 700700 / DSM 12829 / CIP 107037 / JCM 12360 / KCTC 9906 / NCIMB 13794 / A6</strain>
    </source>
</reference>
<protein>
    <recommendedName>
        <fullName evidence="2">Small ribosomal subunit protein uS12</fullName>
    </recommendedName>
    <alternativeName>
        <fullName evidence="3">30S ribosomal protein S12</fullName>
    </alternativeName>
</protein>